<reference key="1">
    <citation type="submission" date="2006-03" db="EMBL/GenBank/DDBJ databases">
        <title>Complete sequence of Rhodopseudomonas palustris BisB18.</title>
        <authorList>
            <consortium name="US DOE Joint Genome Institute"/>
            <person name="Copeland A."/>
            <person name="Lucas S."/>
            <person name="Lapidus A."/>
            <person name="Barry K."/>
            <person name="Detter J.C."/>
            <person name="Glavina del Rio T."/>
            <person name="Hammon N."/>
            <person name="Israni S."/>
            <person name="Dalin E."/>
            <person name="Tice H."/>
            <person name="Pitluck S."/>
            <person name="Chain P."/>
            <person name="Malfatti S."/>
            <person name="Shin M."/>
            <person name="Vergez L."/>
            <person name="Schmutz J."/>
            <person name="Larimer F."/>
            <person name="Land M."/>
            <person name="Hauser L."/>
            <person name="Pelletier D.A."/>
            <person name="Kyrpides N."/>
            <person name="Anderson I."/>
            <person name="Oda Y."/>
            <person name="Harwood C.S."/>
            <person name="Richardson P."/>
        </authorList>
    </citation>
    <scope>NUCLEOTIDE SEQUENCE [LARGE SCALE GENOMIC DNA]</scope>
    <source>
        <strain>BisB18</strain>
    </source>
</reference>
<proteinExistence type="inferred from homology"/>
<comment type="function">
    <text evidence="1">Responsible for the release of ribosomes from messenger RNA at the termination of protein biosynthesis. May increase the efficiency of translation by recycling ribosomes from one round of translation to another.</text>
</comment>
<comment type="subcellular location">
    <subcellularLocation>
        <location evidence="1">Cytoplasm</location>
    </subcellularLocation>
</comment>
<comment type="similarity">
    <text evidence="1">Belongs to the RRF family.</text>
</comment>
<gene>
    <name evidence="1" type="primary">frr</name>
    <name type="ordered locus">RPC_2439</name>
</gene>
<evidence type="ECO:0000255" key="1">
    <source>
        <dbReference type="HAMAP-Rule" id="MF_00040"/>
    </source>
</evidence>
<accession>Q215E6</accession>
<protein>
    <recommendedName>
        <fullName evidence="1">Ribosome-recycling factor</fullName>
        <shortName evidence="1">RRF</shortName>
    </recommendedName>
    <alternativeName>
        <fullName evidence="1">Ribosome-releasing factor</fullName>
    </alternativeName>
</protein>
<feature type="chain" id="PRO_0000341035" description="Ribosome-recycling factor">
    <location>
        <begin position="1"/>
        <end position="187"/>
    </location>
</feature>
<name>RRF_RHOPB</name>
<sequence>MPTGGFDINELKRRMQGATQSLKHELGGLRTGRAAASMLEPVQVEAYGSHMPLNQLATVSVPEPRLLSVQVWDRSMVKAVEKAIVDSNLGLSPATEGQVLRLRIPELNEERRKELVKVAHKYAEATRVAVRHVRRDGLDTLKKLEKNSEISEDDQERLAHEVQKATDATILEVDQLLAAKEKEILTV</sequence>
<organism>
    <name type="scientific">Rhodopseudomonas palustris (strain BisB18)</name>
    <dbReference type="NCBI Taxonomy" id="316056"/>
    <lineage>
        <taxon>Bacteria</taxon>
        <taxon>Pseudomonadati</taxon>
        <taxon>Pseudomonadota</taxon>
        <taxon>Alphaproteobacteria</taxon>
        <taxon>Hyphomicrobiales</taxon>
        <taxon>Nitrobacteraceae</taxon>
        <taxon>Rhodopseudomonas</taxon>
    </lineage>
</organism>
<keyword id="KW-0963">Cytoplasm</keyword>
<keyword id="KW-0648">Protein biosynthesis</keyword>
<dbReference type="EMBL" id="CP000301">
    <property type="protein sequence ID" value="ABD87990.1"/>
    <property type="molecule type" value="Genomic_DNA"/>
</dbReference>
<dbReference type="SMR" id="Q215E6"/>
<dbReference type="STRING" id="316056.RPC_2439"/>
<dbReference type="KEGG" id="rpc:RPC_2439"/>
<dbReference type="eggNOG" id="COG0233">
    <property type="taxonomic scope" value="Bacteria"/>
</dbReference>
<dbReference type="HOGENOM" id="CLU_073981_2_1_5"/>
<dbReference type="OrthoDB" id="9804006at2"/>
<dbReference type="GO" id="GO:0005829">
    <property type="term" value="C:cytosol"/>
    <property type="evidence" value="ECO:0007669"/>
    <property type="project" value="GOC"/>
</dbReference>
<dbReference type="GO" id="GO:0043023">
    <property type="term" value="F:ribosomal large subunit binding"/>
    <property type="evidence" value="ECO:0007669"/>
    <property type="project" value="TreeGrafter"/>
</dbReference>
<dbReference type="GO" id="GO:0002184">
    <property type="term" value="P:cytoplasmic translational termination"/>
    <property type="evidence" value="ECO:0007669"/>
    <property type="project" value="TreeGrafter"/>
</dbReference>
<dbReference type="CDD" id="cd00520">
    <property type="entry name" value="RRF"/>
    <property type="match status" value="1"/>
</dbReference>
<dbReference type="FunFam" id="1.10.132.20:FF:000001">
    <property type="entry name" value="Ribosome-recycling factor"/>
    <property type="match status" value="1"/>
</dbReference>
<dbReference type="FunFam" id="3.30.1360.40:FF:000001">
    <property type="entry name" value="Ribosome-recycling factor"/>
    <property type="match status" value="1"/>
</dbReference>
<dbReference type="Gene3D" id="3.30.1360.40">
    <property type="match status" value="1"/>
</dbReference>
<dbReference type="Gene3D" id="1.10.132.20">
    <property type="entry name" value="Ribosome-recycling factor"/>
    <property type="match status" value="1"/>
</dbReference>
<dbReference type="HAMAP" id="MF_00040">
    <property type="entry name" value="RRF"/>
    <property type="match status" value="1"/>
</dbReference>
<dbReference type="InterPro" id="IPR002661">
    <property type="entry name" value="Ribosome_recyc_fac"/>
</dbReference>
<dbReference type="InterPro" id="IPR023584">
    <property type="entry name" value="Ribosome_recyc_fac_dom"/>
</dbReference>
<dbReference type="InterPro" id="IPR036191">
    <property type="entry name" value="RRF_sf"/>
</dbReference>
<dbReference type="NCBIfam" id="TIGR00496">
    <property type="entry name" value="frr"/>
    <property type="match status" value="1"/>
</dbReference>
<dbReference type="PANTHER" id="PTHR20982:SF3">
    <property type="entry name" value="MITOCHONDRIAL RIBOSOME RECYCLING FACTOR PSEUDO 1"/>
    <property type="match status" value="1"/>
</dbReference>
<dbReference type="PANTHER" id="PTHR20982">
    <property type="entry name" value="RIBOSOME RECYCLING FACTOR"/>
    <property type="match status" value="1"/>
</dbReference>
<dbReference type="Pfam" id="PF01765">
    <property type="entry name" value="RRF"/>
    <property type="match status" value="1"/>
</dbReference>
<dbReference type="SUPFAM" id="SSF55194">
    <property type="entry name" value="Ribosome recycling factor, RRF"/>
    <property type="match status" value="1"/>
</dbReference>